<comment type="function">
    <text evidence="1">Part of the ABC transporter complex PhnCDE involved in phosphonates import. Responsible for energy coupling to the transport system.</text>
</comment>
<comment type="catalytic activity">
    <reaction evidence="1">
        <text>phosphonate(out) + ATP + H2O = phosphonate(in) + ADP + phosphate + H(+)</text>
        <dbReference type="Rhea" id="RHEA:18065"/>
        <dbReference type="ChEBI" id="CHEBI:15377"/>
        <dbReference type="ChEBI" id="CHEBI:15378"/>
        <dbReference type="ChEBI" id="CHEBI:16215"/>
        <dbReference type="ChEBI" id="CHEBI:30616"/>
        <dbReference type="ChEBI" id="CHEBI:43474"/>
        <dbReference type="ChEBI" id="CHEBI:456216"/>
        <dbReference type="EC" id="7.3.2.2"/>
    </reaction>
</comment>
<comment type="subunit">
    <text evidence="1">The complex is composed of two ATP-binding proteins (PhnC), two transmembrane proteins (PhnE) and a solute-binding protein (PhnD).</text>
</comment>
<comment type="subcellular location">
    <subcellularLocation>
        <location evidence="1">Cell membrane</location>
        <topology evidence="1">Peripheral membrane protein</topology>
    </subcellularLocation>
</comment>
<comment type="similarity">
    <text evidence="1">Belongs to the ABC transporter superfamily. Phosphonates importer (TC 3.A.1.9.1) family.</text>
</comment>
<feature type="chain" id="PRO_0000092732" description="Phosphonates import ATP-binding protein PhnC">
    <location>
        <begin position="1"/>
        <end position="257"/>
    </location>
</feature>
<feature type="domain" description="ABC transporter" evidence="1">
    <location>
        <begin position="4"/>
        <end position="248"/>
    </location>
</feature>
<feature type="binding site" evidence="1">
    <location>
        <begin position="37"/>
        <end position="44"/>
    </location>
    <ligand>
        <name>ATP</name>
        <dbReference type="ChEBI" id="CHEBI:30616"/>
    </ligand>
</feature>
<gene>
    <name evidence="1" type="primary">phnC</name>
    <name type="ordered locus">SAR0144</name>
</gene>
<evidence type="ECO:0000255" key="1">
    <source>
        <dbReference type="HAMAP-Rule" id="MF_01713"/>
    </source>
</evidence>
<proteinExistence type="inferred from homology"/>
<name>PHNC_STAAR</name>
<accession>Q6GKG3</accession>
<organism>
    <name type="scientific">Staphylococcus aureus (strain MRSA252)</name>
    <dbReference type="NCBI Taxonomy" id="282458"/>
    <lineage>
        <taxon>Bacteria</taxon>
        <taxon>Bacillati</taxon>
        <taxon>Bacillota</taxon>
        <taxon>Bacilli</taxon>
        <taxon>Bacillales</taxon>
        <taxon>Staphylococcaceae</taxon>
        <taxon>Staphylococcus</taxon>
    </lineage>
</organism>
<dbReference type="EC" id="7.3.2.2" evidence="1"/>
<dbReference type="EMBL" id="BX571856">
    <property type="protein sequence ID" value="CAG39171.1"/>
    <property type="molecule type" value="Genomic_DNA"/>
</dbReference>
<dbReference type="RefSeq" id="WP_000078278.1">
    <property type="nucleotide sequence ID" value="NC_002952.2"/>
</dbReference>
<dbReference type="SMR" id="Q6GKG3"/>
<dbReference type="KEGG" id="sar:SAR0144"/>
<dbReference type="HOGENOM" id="CLU_000604_1_22_9"/>
<dbReference type="Proteomes" id="UP000000596">
    <property type="component" value="Chromosome"/>
</dbReference>
<dbReference type="GO" id="GO:0005886">
    <property type="term" value="C:plasma membrane"/>
    <property type="evidence" value="ECO:0007669"/>
    <property type="project" value="UniProtKB-SubCell"/>
</dbReference>
<dbReference type="GO" id="GO:0015416">
    <property type="term" value="F:ABC-type phosphonate transporter activity"/>
    <property type="evidence" value="ECO:0007669"/>
    <property type="project" value="UniProtKB-EC"/>
</dbReference>
<dbReference type="GO" id="GO:0005524">
    <property type="term" value="F:ATP binding"/>
    <property type="evidence" value="ECO:0007669"/>
    <property type="project" value="UniProtKB-KW"/>
</dbReference>
<dbReference type="GO" id="GO:0016887">
    <property type="term" value="F:ATP hydrolysis activity"/>
    <property type="evidence" value="ECO:0007669"/>
    <property type="project" value="InterPro"/>
</dbReference>
<dbReference type="CDD" id="cd03256">
    <property type="entry name" value="ABC_PhnC_transporter"/>
    <property type="match status" value="1"/>
</dbReference>
<dbReference type="Gene3D" id="3.40.50.300">
    <property type="entry name" value="P-loop containing nucleotide triphosphate hydrolases"/>
    <property type="match status" value="1"/>
</dbReference>
<dbReference type="InterPro" id="IPR003593">
    <property type="entry name" value="AAA+_ATPase"/>
</dbReference>
<dbReference type="InterPro" id="IPR003439">
    <property type="entry name" value="ABC_transporter-like_ATP-bd"/>
</dbReference>
<dbReference type="InterPro" id="IPR017871">
    <property type="entry name" value="ABC_transporter-like_CS"/>
</dbReference>
<dbReference type="InterPro" id="IPR012693">
    <property type="entry name" value="ABC_transpr_PhnC"/>
</dbReference>
<dbReference type="InterPro" id="IPR050086">
    <property type="entry name" value="MetN_ABC_transporter-like"/>
</dbReference>
<dbReference type="InterPro" id="IPR027417">
    <property type="entry name" value="P-loop_NTPase"/>
</dbReference>
<dbReference type="NCBIfam" id="TIGR02315">
    <property type="entry name" value="ABC_phnC"/>
    <property type="match status" value="1"/>
</dbReference>
<dbReference type="PANTHER" id="PTHR43166">
    <property type="entry name" value="AMINO ACID IMPORT ATP-BINDING PROTEIN"/>
    <property type="match status" value="1"/>
</dbReference>
<dbReference type="PANTHER" id="PTHR43166:SF6">
    <property type="entry name" value="PHOSPHONATES IMPORT ATP-BINDING PROTEIN PHNC"/>
    <property type="match status" value="1"/>
</dbReference>
<dbReference type="Pfam" id="PF00005">
    <property type="entry name" value="ABC_tran"/>
    <property type="match status" value="1"/>
</dbReference>
<dbReference type="SMART" id="SM00382">
    <property type="entry name" value="AAA"/>
    <property type="match status" value="1"/>
</dbReference>
<dbReference type="SUPFAM" id="SSF52540">
    <property type="entry name" value="P-loop containing nucleoside triphosphate hydrolases"/>
    <property type="match status" value="1"/>
</dbReference>
<dbReference type="PROSITE" id="PS00211">
    <property type="entry name" value="ABC_TRANSPORTER_1"/>
    <property type="match status" value="1"/>
</dbReference>
<dbReference type="PROSITE" id="PS50893">
    <property type="entry name" value="ABC_TRANSPORTER_2"/>
    <property type="match status" value="1"/>
</dbReference>
<dbReference type="PROSITE" id="PS51249">
    <property type="entry name" value="PHNC"/>
    <property type="match status" value="1"/>
</dbReference>
<keyword id="KW-0067">ATP-binding</keyword>
<keyword id="KW-1003">Cell membrane</keyword>
<keyword id="KW-0472">Membrane</keyword>
<keyword id="KW-0547">Nucleotide-binding</keyword>
<keyword id="KW-0918">Phosphonate transport</keyword>
<keyword id="KW-1278">Translocase</keyword>
<keyword id="KW-0813">Transport</keyword>
<sequence>MSQIKFKNVSKVYPNGHVGLKNINLNIEKGEFAVIVGLSGAGKSTLLRSVNRLHDITSGEIFIQGKSITKAHGKALLEMRRNIGMIFQHFNLVKRSSVLRNVLSGRVGYHPTWKMVLGLFPKEDKIKAMDALERVNILDKYNQRSDELSGGQQQRISIARALCQESEIILADEPVASLDPLTTKQVMDDLRKINQELGITILINLHFVDLAKEYGTRIIGLRDGEVVYDGPASEATDDVFSKIYGRTIKEDEKLGVN</sequence>
<reference key="1">
    <citation type="journal article" date="2004" name="Proc. Natl. Acad. Sci. U.S.A.">
        <title>Complete genomes of two clinical Staphylococcus aureus strains: evidence for the rapid evolution of virulence and drug resistance.</title>
        <authorList>
            <person name="Holden M.T.G."/>
            <person name="Feil E.J."/>
            <person name="Lindsay J.A."/>
            <person name="Peacock S.J."/>
            <person name="Day N.P.J."/>
            <person name="Enright M.C."/>
            <person name="Foster T.J."/>
            <person name="Moore C.E."/>
            <person name="Hurst L."/>
            <person name="Atkin R."/>
            <person name="Barron A."/>
            <person name="Bason N."/>
            <person name="Bentley S.D."/>
            <person name="Chillingworth C."/>
            <person name="Chillingworth T."/>
            <person name="Churcher C."/>
            <person name="Clark L."/>
            <person name="Corton C."/>
            <person name="Cronin A."/>
            <person name="Doggett J."/>
            <person name="Dowd L."/>
            <person name="Feltwell T."/>
            <person name="Hance Z."/>
            <person name="Harris B."/>
            <person name="Hauser H."/>
            <person name="Holroyd S."/>
            <person name="Jagels K."/>
            <person name="James K.D."/>
            <person name="Lennard N."/>
            <person name="Line A."/>
            <person name="Mayes R."/>
            <person name="Moule S."/>
            <person name="Mungall K."/>
            <person name="Ormond D."/>
            <person name="Quail M.A."/>
            <person name="Rabbinowitsch E."/>
            <person name="Rutherford K.M."/>
            <person name="Sanders M."/>
            <person name="Sharp S."/>
            <person name="Simmonds M."/>
            <person name="Stevens K."/>
            <person name="Whitehead S."/>
            <person name="Barrell B.G."/>
            <person name="Spratt B.G."/>
            <person name="Parkhill J."/>
        </authorList>
    </citation>
    <scope>NUCLEOTIDE SEQUENCE [LARGE SCALE GENOMIC DNA]</scope>
    <source>
        <strain>MRSA252</strain>
    </source>
</reference>
<protein>
    <recommendedName>
        <fullName evidence="1">Phosphonates import ATP-binding protein PhnC</fullName>
        <ecNumber evidence="1">7.3.2.2</ecNumber>
    </recommendedName>
</protein>